<protein>
    <recommendedName>
        <fullName evidence="1">Ribosomal RNA large subunit methyltransferase H</fullName>
        <ecNumber evidence="1">2.1.1.177</ecNumber>
    </recommendedName>
    <alternativeName>
        <fullName evidence="1">23S rRNA (pseudouridine1915-N3)-methyltransferase</fullName>
    </alternativeName>
    <alternativeName>
        <fullName evidence="1">23S rRNA m3Psi1915 methyltransferase</fullName>
    </alternativeName>
    <alternativeName>
        <fullName evidence="1">rRNA (pseudouridine-N3-)-methyltransferase RlmH</fullName>
    </alternativeName>
</protein>
<feature type="chain" id="PRO_1000199828" description="Ribosomal RNA large subunit methyltransferase H">
    <location>
        <begin position="1"/>
        <end position="156"/>
    </location>
</feature>
<feature type="binding site" evidence="1">
    <location>
        <position position="73"/>
    </location>
    <ligand>
        <name>S-adenosyl-L-methionine</name>
        <dbReference type="ChEBI" id="CHEBI:59789"/>
    </ligand>
</feature>
<feature type="binding site" evidence="1">
    <location>
        <position position="104"/>
    </location>
    <ligand>
        <name>S-adenosyl-L-methionine</name>
        <dbReference type="ChEBI" id="CHEBI:59789"/>
    </ligand>
</feature>
<feature type="binding site" evidence="1">
    <location>
        <begin position="123"/>
        <end position="128"/>
    </location>
    <ligand>
        <name>S-adenosyl-L-methionine</name>
        <dbReference type="ChEBI" id="CHEBI:59789"/>
    </ligand>
</feature>
<dbReference type="EC" id="2.1.1.177" evidence="1"/>
<dbReference type="EMBL" id="CP001252">
    <property type="protein sequence ID" value="ACK45608.1"/>
    <property type="molecule type" value="Genomic_DNA"/>
</dbReference>
<dbReference type="RefSeq" id="WP_006082752.1">
    <property type="nucleotide sequence ID" value="NC_011663.1"/>
</dbReference>
<dbReference type="SMR" id="B8E4X2"/>
<dbReference type="GeneID" id="11774932"/>
<dbReference type="KEGG" id="sbp:Sbal223_1093"/>
<dbReference type="HOGENOM" id="CLU_100552_1_0_6"/>
<dbReference type="Proteomes" id="UP000002507">
    <property type="component" value="Chromosome"/>
</dbReference>
<dbReference type="GO" id="GO:0005737">
    <property type="term" value="C:cytoplasm"/>
    <property type="evidence" value="ECO:0007669"/>
    <property type="project" value="UniProtKB-SubCell"/>
</dbReference>
<dbReference type="GO" id="GO:0070038">
    <property type="term" value="F:rRNA (pseudouridine-N3-)-methyltransferase activity"/>
    <property type="evidence" value="ECO:0007669"/>
    <property type="project" value="UniProtKB-UniRule"/>
</dbReference>
<dbReference type="CDD" id="cd18081">
    <property type="entry name" value="RlmH-like"/>
    <property type="match status" value="1"/>
</dbReference>
<dbReference type="Gene3D" id="3.40.1280.10">
    <property type="match status" value="1"/>
</dbReference>
<dbReference type="HAMAP" id="MF_00658">
    <property type="entry name" value="23SrRNA_methyltr_H"/>
    <property type="match status" value="1"/>
</dbReference>
<dbReference type="InterPro" id="IPR029028">
    <property type="entry name" value="Alpha/beta_knot_MTases"/>
</dbReference>
<dbReference type="InterPro" id="IPR003742">
    <property type="entry name" value="RlmH-like"/>
</dbReference>
<dbReference type="InterPro" id="IPR029026">
    <property type="entry name" value="tRNA_m1G_MTases_N"/>
</dbReference>
<dbReference type="NCBIfam" id="NF000984">
    <property type="entry name" value="PRK00103.1-1"/>
    <property type="match status" value="1"/>
</dbReference>
<dbReference type="NCBIfam" id="NF000986">
    <property type="entry name" value="PRK00103.1-4"/>
    <property type="match status" value="1"/>
</dbReference>
<dbReference type="NCBIfam" id="TIGR00246">
    <property type="entry name" value="tRNA_RlmH_YbeA"/>
    <property type="match status" value="1"/>
</dbReference>
<dbReference type="PANTHER" id="PTHR33603">
    <property type="entry name" value="METHYLTRANSFERASE"/>
    <property type="match status" value="1"/>
</dbReference>
<dbReference type="PANTHER" id="PTHR33603:SF1">
    <property type="entry name" value="RIBOSOMAL RNA LARGE SUBUNIT METHYLTRANSFERASE H"/>
    <property type="match status" value="1"/>
</dbReference>
<dbReference type="Pfam" id="PF02590">
    <property type="entry name" value="SPOUT_MTase"/>
    <property type="match status" value="1"/>
</dbReference>
<dbReference type="PIRSF" id="PIRSF004505">
    <property type="entry name" value="MT_bac"/>
    <property type="match status" value="1"/>
</dbReference>
<dbReference type="SUPFAM" id="SSF75217">
    <property type="entry name" value="alpha/beta knot"/>
    <property type="match status" value="1"/>
</dbReference>
<name>RLMH_SHEB2</name>
<keyword id="KW-0963">Cytoplasm</keyword>
<keyword id="KW-0489">Methyltransferase</keyword>
<keyword id="KW-0698">rRNA processing</keyword>
<keyword id="KW-0949">S-adenosyl-L-methionine</keyword>
<keyword id="KW-0808">Transferase</keyword>
<reference key="1">
    <citation type="submission" date="2008-12" db="EMBL/GenBank/DDBJ databases">
        <title>Complete sequence of chromosome of Shewanella baltica OS223.</title>
        <authorList>
            <consortium name="US DOE Joint Genome Institute"/>
            <person name="Lucas S."/>
            <person name="Copeland A."/>
            <person name="Lapidus A."/>
            <person name="Glavina del Rio T."/>
            <person name="Dalin E."/>
            <person name="Tice H."/>
            <person name="Bruce D."/>
            <person name="Goodwin L."/>
            <person name="Pitluck S."/>
            <person name="Chertkov O."/>
            <person name="Meincke L."/>
            <person name="Brettin T."/>
            <person name="Detter J.C."/>
            <person name="Han C."/>
            <person name="Kuske C.R."/>
            <person name="Larimer F."/>
            <person name="Land M."/>
            <person name="Hauser L."/>
            <person name="Kyrpides N."/>
            <person name="Ovchinnikova G."/>
            <person name="Brettar I."/>
            <person name="Rodrigues J."/>
            <person name="Konstantinidis K."/>
            <person name="Tiedje J."/>
        </authorList>
    </citation>
    <scope>NUCLEOTIDE SEQUENCE [LARGE SCALE GENOMIC DNA]</scope>
    <source>
        <strain>OS223</strain>
    </source>
</reference>
<gene>
    <name evidence="1" type="primary">rlmH</name>
    <name type="ordered locus">Sbal223_1093</name>
</gene>
<accession>B8E4X2</accession>
<evidence type="ECO:0000255" key="1">
    <source>
        <dbReference type="HAMAP-Rule" id="MF_00658"/>
    </source>
</evidence>
<proteinExistence type="inferred from homology"/>
<organism>
    <name type="scientific">Shewanella baltica (strain OS223)</name>
    <dbReference type="NCBI Taxonomy" id="407976"/>
    <lineage>
        <taxon>Bacteria</taxon>
        <taxon>Pseudomonadati</taxon>
        <taxon>Pseudomonadota</taxon>
        <taxon>Gammaproteobacteria</taxon>
        <taxon>Alteromonadales</taxon>
        <taxon>Shewanellaceae</taxon>
        <taxon>Shewanella</taxon>
    </lineage>
</organism>
<sequence length="156" mass="17460">MKLQLIAVGTRMPDWVTRGFEEYQRRFPRDMALELIEIPAGKRGKNADIVRILQKEGEQMLAAIPKGNHIVSLDLPGKNWTTPELATALTKWQLDGRDVSLLIGGPEGLAPACKEAANQSWCLSALTLPHPLVRVVVAESLYRAWSVNTNHPYHRE</sequence>
<comment type="function">
    <text evidence="1">Specifically methylates the pseudouridine at position 1915 (m3Psi1915) in 23S rRNA.</text>
</comment>
<comment type="catalytic activity">
    <reaction evidence="1">
        <text>pseudouridine(1915) in 23S rRNA + S-adenosyl-L-methionine = N(3)-methylpseudouridine(1915) in 23S rRNA + S-adenosyl-L-homocysteine + H(+)</text>
        <dbReference type="Rhea" id="RHEA:42752"/>
        <dbReference type="Rhea" id="RHEA-COMP:10221"/>
        <dbReference type="Rhea" id="RHEA-COMP:10222"/>
        <dbReference type="ChEBI" id="CHEBI:15378"/>
        <dbReference type="ChEBI" id="CHEBI:57856"/>
        <dbReference type="ChEBI" id="CHEBI:59789"/>
        <dbReference type="ChEBI" id="CHEBI:65314"/>
        <dbReference type="ChEBI" id="CHEBI:74486"/>
        <dbReference type="EC" id="2.1.1.177"/>
    </reaction>
</comment>
<comment type="subunit">
    <text evidence="1">Homodimer.</text>
</comment>
<comment type="subcellular location">
    <subcellularLocation>
        <location evidence="1">Cytoplasm</location>
    </subcellularLocation>
</comment>
<comment type="similarity">
    <text evidence="1">Belongs to the RNA methyltransferase RlmH family.</text>
</comment>